<protein>
    <recommendedName>
        <fullName>Splicing factor 3B subunit 4</fullName>
    </recommendedName>
</protein>
<dbReference type="EMBL" id="AAFI02000003">
    <property type="protein sequence ID" value="EAL73310.1"/>
    <property type="molecule type" value="Genomic_DNA"/>
</dbReference>
<dbReference type="RefSeq" id="XP_647248.1">
    <property type="nucleotide sequence ID" value="XM_642156.1"/>
</dbReference>
<dbReference type="SMR" id="Q55GD6"/>
<dbReference type="FunCoup" id="Q55GD6">
    <property type="interactions" value="238"/>
</dbReference>
<dbReference type="STRING" id="44689.Q55GD6"/>
<dbReference type="PaxDb" id="44689-DDB0233172"/>
<dbReference type="EnsemblProtists" id="EAL73310">
    <property type="protein sequence ID" value="EAL73310"/>
    <property type="gene ID" value="DDB_G0267714"/>
</dbReference>
<dbReference type="GeneID" id="8616053"/>
<dbReference type="KEGG" id="ddi:DDB_G0267714"/>
<dbReference type="dictyBase" id="DDB_G0267714">
    <property type="gene designation" value="sf3b4"/>
</dbReference>
<dbReference type="VEuPathDB" id="AmoebaDB:DDB_G0267714"/>
<dbReference type="eggNOG" id="KOG0131">
    <property type="taxonomic scope" value="Eukaryota"/>
</dbReference>
<dbReference type="HOGENOM" id="CLU_012062_21_0_1"/>
<dbReference type="InParanoid" id="Q55GD6"/>
<dbReference type="OMA" id="ERNHEAC"/>
<dbReference type="PhylomeDB" id="Q55GD6"/>
<dbReference type="PRO" id="PR:Q55GD6"/>
<dbReference type="Proteomes" id="UP000002195">
    <property type="component" value="Chromosome 1"/>
</dbReference>
<dbReference type="GO" id="GO:0071011">
    <property type="term" value="C:precatalytic spliceosome"/>
    <property type="evidence" value="ECO:0000318"/>
    <property type="project" value="GO_Central"/>
</dbReference>
<dbReference type="GO" id="GO:0005681">
    <property type="term" value="C:spliceosomal complex"/>
    <property type="evidence" value="ECO:0000250"/>
    <property type="project" value="dictyBase"/>
</dbReference>
<dbReference type="GO" id="GO:0005686">
    <property type="term" value="C:U2 snRNP"/>
    <property type="evidence" value="ECO:0000318"/>
    <property type="project" value="GO_Central"/>
</dbReference>
<dbReference type="GO" id="GO:0003723">
    <property type="term" value="F:RNA binding"/>
    <property type="evidence" value="ECO:0000318"/>
    <property type="project" value="GO_Central"/>
</dbReference>
<dbReference type="GO" id="GO:0000398">
    <property type="term" value="P:mRNA splicing, via spliceosome"/>
    <property type="evidence" value="ECO:0000318"/>
    <property type="project" value="GO_Central"/>
</dbReference>
<dbReference type="CDD" id="cd12334">
    <property type="entry name" value="RRM1_SF3B4"/>
    <property type="match status" value="1"/>
</dbReference>
<dbReference type="CDD" id="cd12335">
    <property type="entry name" value="RRM2_SF3B4"/>
    <property type="match status" value="1"/>
</dbReference>
<dbReference type="FunFam" id="3.30.70.330:FF:000505">
    <property type="entry name" value="Splicing factor 3B subunit 4"/>
    <property type="match status" value="1"/>
</dbReference>
<dbReference type="FunFam" id="3.30.70.330:FF:000059">
    <property type="entry name" value="splicing factor 3B subunit 4"/>
    <property type="match status" value="1"/>
</dbReference>
<dbReference type="Gene3D" id="3.30.70.330">
    <property type="match status" value="2"/>
</dbReference>
<dbReference type="InterPro" id="IPR012677">
    <property type="entry name" value="Nucleotide-bd_a/b_plait_sf"/>
</dbReference>
<dbReference type="InterPro" id="IPR035979">
    <property type="entry name" value="RBD_domain_sf"/>
</dbReference>
<dbReference type="InterPro" id="IPR000504">
    <property type="entry name" value="RRM_dom"/>
</dbReference>
<dbReference type="InterPro" id="IPR034158">
    <property type="entry name" value="SF3B4_RRM1"/>
</dbReference>
<dbReference type="InterPro" id="IPR034159">
    <property type="entry name" value="SF3B4_RRM2"/>
</dbReference>
<dbReference type="InterPro" id="IPR052084">
    <property type="entry name" value="SF3B4_spliceosome_assoc"/>
</dbReference>
<dbReference type="PANTHER" id="PTHR48030">
    <property type="entry name" value="SPLICING FACTOR 3B SUBUNIT 4"/>
    <property type="match status" value="1"/>
</dbReference>
<dbReference type="PANTHER" id="PTHR48030:SF3">
    <property type="entry name" value="SPLICING FACTOR 3B SUBUNIT 4"/>
    <property type="match status" value="1"/>
</dbReference>
<dbReference type="Pfam" id="PF00076">
    <property type="entry name" value="RRM_1"/>
    <property type="match status" value="2"/>
</dbReference>
<dbReference type="SMART" id="SM00360">
    <property type="entry name" value="RRM"/>
    <property type="match status" value="2"/>
</dbReference>
<dbReference type="SUPFAM" id="SSF54928">
    <property type="entry name" value="RNA-binding domain, RBD"/>
    <property type="match status" value="1"/>
</dbReference>
<dbReference type="PROSITE" id="PS50102">
    <property type="entry name" value="RRM"/>
    <property type="match status" value="2"/>
</dbReference>
<reference key="1">
    <citation type="journal article" date="2005" name="Nature">
        <title>The genome of the social amoeba Dictyostelium discoideum.</title>
        <authorList>
            <person name="Eichinger L."/>
            <person name="Pachebat J.A."/>
            <person name="Gloeckner G."/>
            <person name="Rajandream M.A."/>
            <person name="Sucgang R."/>
            <person name="Berriman M."/>
            <person name="Song J."/>
            <person name="Olsen R."/>
            <person name="Szafranski K."/>
            <person name="Xu Q."/>
            <person name="Tunggal B."/>
            <person name="Kummerfeld S."/>
            <person name="Madera M."/>
            <person name="Konfortov B.A."/>
            <person name="Rivero F."/>
            <person name="Bankier A.T."/>
            <person name="Lehmann R."/>
            <person name="Hamlin N."/>
            <person name="Davies R."/>
            <person name="Gaudet P."/>
            <person name="Fey P."/>
            <person name="Pilcher K."/>
            <person name="Chen G."/>
            <person name="Saunders D."/>
            <person name="Sodergren E.J."/>
            <person name="Davis P."/>
            <person name="Kerhornou A."/>
            <person name="Nie X."/>
            <person name="Hall N."/>
            <person name="Anjard C."/>
            <person name="Hemphill L."/>
            <person name="Bason N."/>
            <person name="Farbrother P."/>
            <person name="Desany B."/>
            <person name="Just E."/>
            <person name="Morio T."/>
            <person name="Rost R."/>
            <person name="Churcher C.M."/>
            <person name="Cooper J."/>
            <person name="Haydock S."/>
            <person name="van Driessche N."/>
            <person name="Cronin A."/>
            <person name="Goodhead I."/>
            <person name="Muzny D.M."/>
            <person name="Mourier T."/>
            <person name="Pain A."/>
            <person name="Lu M."/>
            <person name="Harper D."/>
            <person name="Lindsay R."/>
            <person name="Hauser H."/>
            <person name="James K.D."/>
            <person name="Quiles M."/>
            <person name="Madan Babu M."/>
            <person name="Saito T."/>
            <person name="Buchrieser C."/>
            <person name="Wardroper A."/>
            <person name="Felder M."/>
            <person name="Thangavelu M."/>
            <person name="Johnson D."/>
            <person name="Knights A."/>
            <person name="Loulseged H."/>
            <person name="Mungall K.L."/>
            <person name="Oliver K."/>
            <person name="Price C."/>
            <person name="Quail M.A."/>
            <person name="Urushihara H."/>
            <person name="Hernandez J."/>
            <person name="Rabbinowitsch E."/>
            <person name="Steffen D."/>
            <person name="Sanders M."/>
            <person name="Ma J."/>
            <person name="Kohara Y."/>
            <person name="Sharp S."/>
            <person name="Simmonds M.N."/>
            <person name="Spiegler S."/>
            <person name="Tivey A."/>
            <person name="Sugano S."/>
            <person name="White B."/>
            <person name="Walker D."/>
            <person name="Woodward J.R."/>
            <person name="Winckler T."/>
            <person name="Tanaka Y."/>
            <person name="Shaulsky G."/>
            <person name="Schleicher M."/>
            <person name="Weinstock G.M."/>
            <person name="Rosenthal A."/>
            <person name="Cox E.C."/>
            <person name="Chisholm R.L."/>
            <person name="Gibbs R.A."/>
            <person name="Loomis W.F."/>
            <person name="Platzer M."/>
            <person name="Kay R.R."/>
            <person name="Williams J.G."/>
            <person name="Dear P.H."/>
            <person name="Noegel A.A."/>
            <person name="Barrell B.G."/>
            <person name="Kuspa A."/>
        </authorList>
    </citation>
    <scope>NUCLEOTIDE SEQUENCE [LARGE SCALE GENOMIC DNA]</scope>
    <source>
        <strain>AX4</strain>
    </source>
</reference>
<gene>
    <name type="primary">sf3b4</name>
    <name type="ORF">DDB_G0267714</name>
</gene>
<name>SF3B4_DICDI</name>
<organism>
    <name type="scientific">Dictyostelium discoideum</name>
    <name type="common">Social amoeba</name>
    <dbReference type="NCBI Taxonomy" id="44689"/>
    <lineage>
        <taxon>Eukaryota</taxon>
        <taxon>Amoebozoa</taxon>
        <taxon>Evosea</taxon>
        <taxon>Eumycetozoa</taxon>
        <taxon>Dictyostelia</taxon>
        <taxon>Dictyosteliales</taxon>
        <taxon>Dictyosteliaceae</taxon>
        <taxon>Dictyostelium</taxon>
    </lineage>
</organism>
<feature type="chain" id="PRO_0000328584" description="Splicing factor 3B subunit 4">
    <location>
        <begin position="1"/>
        <end position="359"/>
    </location>
</feature>
<feature type="domain" description="RRM 1" evidence="2">
    <location>
        <begin position="13"/>
        <end position="91"/>
    </location>
</feature>
<feature type="domain" description="RRM 2" evidence="2">
    <location>
        <begin position="98"/>
        <end position="176"/>
    </location>
</feature>
<feature type="region of interest" description="Disordered" evidence="3">
    <location>
        <begin position="198"/>
        <end position="239"/>
    </location>
</feature>
<feature type="region of interest" description="Disordered" evidence="3">
    <location>
        <begin position="293"/>
        <end position="337"/>
    </location>
</feature>
<feature type="compositionally biased region" description="Low complexity" evidence="3">
    <location>
        <begin position="202"/>
        <end position="231"/>
    </location>
</feature>
<feature type="compositionally biased region" description="Low complexity" evidence="3">
    <location>
        <begin position="293"/>
        <end position="302"/>
    </location>
</feature>
<feature type="compositionally biased region" description="Basic residues" evidence="3">
    <location>
        <begin position="303"/>
        <end position="312"/>
    </location>
</feature>
<proteinExistence type="inferred from homology"/>
<keyword id="KW-0507">mRNA processing</keyword>
<keyword id="KW-0508">mRNA splicing</keyword>
<keyword id="KW-0539">Nucleus</keyword>
<keyword id="KW-1185">Reference proteome</keyword>
<keyword id="KW-0677">Repeat</keyword>
<keyword id="KW-0694">RNA-binding</keyword>
<keyword id="KW-0747">Spliceosome</keyword>
<comment type="function">
    <text evidence="1">Subunit of the splicing factor SF3B required for 'A' complex assembly formed by the stable binding of U2 snRNP to the branchpoint sequence (BPS) in pre-mRNA. Sequence independent binding of SF3A/SF3B complex upstream of the branch site is essential, it may anchor U2 snRNP to the pre-mRNA. May also be involved in the assembly of the 'E' complex. Has been found in complex 'B' and 'C' as well (By similarity).</text>
</comment>
<comment type="subunit">
    <text evidence="1">Component of splicing factor SF3B which is composed of at least eight subunits.</text>
</comment>
<comment type="subcellular location">
    <subcellularLocation>
        <location evidence="1">Nucleus</location>
    </subcellularLocation>
</comment>
<comment type="similarity">
    <text evidence="4">Belongs to the SF3B4 family.</text>
</comment>
<evidence type="ECO:0000250" key="1"/>
<evidence type="ECO:0000255" key="2">
    <source>
        <dbReference type="PROSITE-ProRule" id="PRU00176"/>
    </source>
</evidence>
<evidence type="ECO:0000256" key="3">
    <source>
        <dbReference type="SAM" id="MobiDB-lite"/>
    </source>
</evidence>
<evidence type="ECO:0000305" key="4"/>
<accession>Q55GD6</accession>
<sequence>MASNLPQERNHEACLLIRDLDPMVTESLLMELFIQAAPVVKVFIPKDKLTQQHSGRAYVEFQSSSDAEYALKVMKFVRLFNKEIKIKKENKDKVDIGANLFIGNLDADVDERILHDTFSRFGTIIFTPKVMRDENGVSKGFAFINFDSFEASDAAIEAMNSQFLCNKPISVTYARKKDSNERHGSSAERIIAASRNTGYLNQQQQQQSSSTSSTSTISTSTPQQQQQQQSQPLPPPIVTAGGIIHQQQIQQQQQLQQQQQQQLQLQQLQLQQLQQQQQQQQQQQQQQQQQQQQQQQQQQQQQHHPHHQHPIPHPHPLPHQLRPHPHPHHPPPPPFNPMLMQFNPMMMPFGGMPPPPPHK</sequence>